<organism>
    <name type="scientific">Tropaeolum majus</name>
    <name type="common">Common nasturtium</name>
    <name type="synonym">Indian cress</name>
    <dbReference type="NCBI Taxonomy" id="4020"/>
    <lineage>
        <taxon>Eukaryota</taxon>
        <taxon>Viridiplantae</taxon>
        <taxon>Streptophyta</taxon>
        <taxon>Embryophyta</taxon>
        <taxon>Tracheophyta</taxon>
        <taxon>Spermatophyta</taxon>
        <taxon>Magnoliopsida</taxon>
        <taxon>eudicotyledons</taxon>
        <taxon>Gunneridae</taxon>
        <taxon>Pentapetalae</taxon>
        <taxon>rosids</taxon>
        <taxon>malvids</taxon>
        <taxon>Brassicales</taxon>
        <taxon>Tropaeolaceae</taxon>
        <taxon>Tropaeolum</taxon>
    </lineage>
</organism>
<proteinExistence type="evidence at protein level"/>
<comment type="function">
    <text>Electron carrier protein. The oxidized form of the cytochrome c heme group can accept an electron from the heme group of the cytochrome c1 subunit of cytochrome reductase. Cytochrome c then transfers this electron to the cytochrome oxidase complex, the final protein carrier in the mitochondrial electron-transport chain.</text>
</comment>
<comment type="subcellular location">
    <subcellularLocation>
        <location>Mitochondrion intermembrane space</location>
    </subcellularLocation>
    <text>Loosely associated with the inner membrane.</text>
</comment>
<comment type="PTM">
    <text>Binds 1 heme c group covalently per subunit.</text>
</comment>
<comment type="similarity">
    <text evidence="2">Belongs to the cytochrome c family.</text>
</comment>
<comment type="caution">
    <text evidence="2">Any one of the Lys residues shown may be an Arg, or an Arg may be missing from the sequence.</text>
</comment>
<comment type="online information" name="Protein Spotlight">
    <link uri="https://www.proteinspotlight.org/back_issues/076"/>
    <text>Life shuttle - Issue 76 of November 2006</text>
</comment>
<dbReference type="PIR" id="A00059">
    <property type="entry name" value="CCNS"/>
</dbReference>
<dbReference type="iPTMnet" id="P00067"/>
<dbReference type="GO" id="GO:0005758">
    <property type="term" value="C:mitochondrial intermembrane space"/>
    <property type="evidence" value="ECO:0007669"/>
    <property type="project" value="UniProtKB-SubCell"/>
</dbReference>
<dbReference type="GO" id="GO:0009055">
    <property type="term" value="F:electron transfer activity"/>
    <property type="evidence" value="ECO:0007669"/>
    <property type="project" value="InterPro"/>
</dbReference>
<dbReference type="GO" id="GO:0020037">
    <property type="term" value="F:heme binding"/>
    <property type="evidence" value="ECO:0007669"/>
    <property type="project" value="InterPro"/>
</dbReference>
<dbReference type="GO" id="GO:0046872">
    <property type="term" value="F:metal ion binding"/>
    <property type="evidence" value="ECO:0007669"/>
    <property type="project" value="UniProtKB-KW"/>
</dbReference>
<dbReference type="FunFam" id="1.10.760.10:FF:000001">
    <property type="entry name" value="Cytochrome c iso-1"/>
    <property type="match status" value="1"/>
</dbReference>
<dbReference type="Gene3D" id="1.10.760.10">
    <property type="entry name" value="Cytochrome c-like domain"/>
    <property type="match status" value="1"/>
</dbReference>
<dbReference type="InterPro" id="IPR009056">
    <property type="entry name" value="Cyt_c-like_dom"/>
</dbReference>
<dbReference type="InterPro" id="IPR036909">
    <property type="entry name" value="Cyt_c-like_dom_sf"/>
</dbReference>
<dbReference type="InterPro" id="IPR002327">
    <property type="entry name" value="Cyt_c_1A/1B"/>
</dbReference>
<dbReference type="PANTHER" id="PTHR11961">
    <property type="entry name" value="CYTOCHROME C"/>
    <property type="match status" value="1"/>
</dbReference>
<dbReference type="Pfam" id="PF00034">
    <property type="entry name" value="Cytochrom_C"/>
    <property type="match status" value="1"/>
</dbReference>
<dbReference type="PRINTS" id="PR00604">
    <property type="entry name" value="CYTCHRMECIAB"/>
</dbReference>
<dbReference type="SUPFAM" id="SSF46626">
    <property type="entry name" value="Cytochrome c"/>
    <property type="match status" value="1"/>
</dbReference>
<dbReference type="PROSITE" id="PS51007">
    <property type="entry name" value="CYTC"/>
    <property type="match status" value="1"/>
</dbReference>
<evidence type="ECO:0000269" key="1">
    <source>
    </source>
</evidence>
<evidence type="ECO:0000305" key="2"/>
<feature type="chain" id="PRO_0000108312" description="Cytochrome c">
    <location>
        <begin position="1"/>
        <end position="111"/>
    </location>
</feature>
<feature type="binding site" description="covalent">
    <location>
        <position position="22"/>
    </location>
    <ligand>
        <name>heme c</name>
        <dbReference type="ChEBI" id="CHEBI:61717"/>
    </ligand>
</feature>
<feature type="binding site" description="covalent">
    <location>
        <position position="25"/>
    </location>
    <ligand>
        <name>heme c</name>
        <dbReference type="ChEBI" id="CHEBI:61717"/>
    </ligand>
</feature>
<feature type="binding site" description="axial binding residue">
    <location>
        <position position="26"/>
    </location>
    <ligand>
        <name>heme c</name>
        <dbReference type="ChEBI" id="CHEBI:61717"/>
    </ligand>
    <ligandPart>
        <name>Fe</name>
        <dbReference type="ChEBI" id="CHEBI:18248"/>
    </ligandPart>
</feature>
<feature type="binding site" description="axial binding residue">
    <location>
        <position position="88"/>
    </location>
    <ligand>
        <name>heme c</name>
        <dbReference type="ChEBI" id="CHEBI:61717"/>
    </ligand>
    <ligandPart>
        <name>Fe</name>
        <dbReference type="ChEBI" id="CHEBI:18248"/>
    </ligandPart>
</feature>
<feature type="modified residue" description="N-acetylalanine" evidence="1">
    <location>
        <position position="1"/>
    </location>
</feature>
<feature type="modified residue" description="N6,N6,N6-trimethyllysine" evidence="1">
    <location>
        <position position="80"/>
    </location>
</feature>
<feature type="modified residue" description="N6,N6,N6-trimethyllysine" evidence="1">
    <location>
        <position position="94"/>
    </location>
</feature>
<protein>
    <recommendedName>
        <fullName>Cytochrome c</fullName>
    </recommendedName>
</protein>
<reference key="1">
    <citation type="journal article" date="1974" name="Biochem. J.">
        <title>The amino acid sequences of cytochrome c from four plant sources.</title>
        <authorList>
            <person name="Brown R.H."/>
            <person name="Boulter D."/>
        </authorList>
    </citation>
    <scope>PROTEIN SEQUENCE</scope>
    <scope>ACETYLATION AT ALA-1</scope>
    <scope>METHYLATION AT LYS-80 AND LYS-94</scope>
</reference>
<sequence length="111" mass="11982">ASFAEAPAGDNKAGDKIFKNKCAQCHTVDKGAGHKQGPNLNGLFGRQSGTTAGYSYSAANKNKAVLWZZATLYDYLLNPKKYIPGTKMVFPGLKKPQDRADLIAYLKESTA</sequence>
<keyword id="KW-0007">Acetylation</keyword>
<keyword id="KW-0903">Direct protein sequencing</keyword>
<keyword id="KW-0249">Electron transport</keyword>
<keyword id="KW-0349">Heme</keyword>
<keyword id="KW-0408">Iron</keyword>
<keyword id="KW-0479">Metal-binding</keyword>
<keyword id="KW-0488">Methylation</keyword>
<keyword id="KW-0496">Mitochondrion</keyword>
<keyword id="KW-0679">Respiratory chain</keyword>
<keyword id="KW-0813">Transport</keyword>
<name>CYC_TROMA</name>
<accession>P00067</accession>